<gene>
    <name evidence="1" type="primary">rpsP</name>
    <name type="ordered locus">AMF_037</name>
</gene>
<proteinExistence type="inferred from homology"/>
<accession>B9KHH1</accession>
<reference key="1">
    <citation type="journal article" date="2009" name="BMC Genomics">
        <title>Conservation in the face of diversity: multistrain analysis of an intracellular bacterium.</title>
        <authorList>
            <person name="Dark M.J."/>
            <person name="Herndon D.R."/>
            <person name="Kappmeyer L.S."/>
            <person name="Gonzales M.P."/>
            <person name="Nordeen E."/>
            <person name="Palmer G.H."/>
            <person name="Knowles D.P. Jr."/>
            <person name="Brayton K.A."/>
        </authorList>
    </citation>
    <scope>NUCLEOTIDE SEQUENCE [LARGE SCALE GENOMIC DNA]</scope>
    <source>
        <strain>Florida</strain>
    </source>
</reference>
<feature type="chain" id="PRO_1000196324" description="Small ribosomal subunit protein bS16">
    <location>
        <begin position="1"/>
        <end position="89"/>
    </location>
</feature>
<comment type="similarity">
    <text evidence="1">Belongs to the bacterial ribosomal protein bS16 family.</text>
</comment>
<dbReference type="EMBL" id="CP001079">
    <property type="protein sequence ID" value="ACM48933.1"/>
    <property type="molecule type" value="Genomic_DNA"/>
</dbReference>
<dbReference type="RefSeq" id="WP_010266854.1">
    <property type="nucleotide sequence ID" value="NZ_AFMS01000054.1"/>
</dbReference>
<dbReference type="SMR" id="B9KHH1"/>
<dbReference type="STRING" id="320483.AMF_037"/>
<dbReference type="GeneID" id="7398758"/>
<dbReference type="KEGG" id="amf:AMF_037"/>
<dbReference type="eggNOG" id="COG0228">
    <property type="taxonomic scope" value="Bacteria"/>
</dbReference>
<dbReference type="HOGENOM" id="CLU_100590_5_0_5"/>
<dbReference type="Proteomes" id="UP000007307">
    <property type="component" value="Chromosome"/>
</dbReference>
<dbReference type="GO" id="GO:0005737">
    <property type="term" value="C:cytoplasm"/>
    <property type="evidence" value="ECO:0007669"/>
    <property type="project" value="UniProtKB-ARBA"/>
</dbReference>
<dbReference type="GO" id="GO:0015935">
    <property type="term" value="C:small ribosomal subunit"/>
    <property type="evidence" value="ECO:0007669"/>
    <property type="project" value="TreeGrafter"/>
</dbReference>
<dbReference type="GO" id="GO:0003735">
    <property type="term" value="F:structural constituent of ribosome"/>
    <property type="evidence" value="ECO:0007669"/>
    <property type="project" value="InterPro"/>
</dbReference>
<dbReference type="GO" id="GO:0006412">
    <property type="term" value="P:translation"/>
    <property type="evidence" value="ECO:0007669"/>
    <property type="project" value="UniProtKB-UniRule"/>
</dbReference>
<dbReference type="Gene3D" id="3.30.1320.10">
    <property type="match status" value="1"/>
</dbReference>
<dbReference type="HAMAP" id="MF_00385">
    <property type="entry name" value="Ribosomal_bS16"/>
    <property type="match status" value="1"/>
</dbReference>
<dbReference type="InterPro" id="IPR000307">
    <property type="entry name" value="Ribosomal_bS16"/>
</dbReference>
<dbReference type="InterPro" id="IPR023803">
    <property type="entry name" value="Ribosomal_bS16_dom_sf"/>
</dbReference>
<dbReference type="NCBIfam" id="TIGR00002">
    <property type="entry name" value="S16"/>
    <property type="match status" value="1"/>
</dbReference>
<dbReference type="PANTHER" id="PTHR12919">
    <property type="entry name" value="30S RIBOSOMAL PROTEIN S16"/>
    <property type="match status" value="1"/>
</dbReference>
<dbReference type="PANTHER" id="PTHR12919:SF20">
    <property type="entry name" value="SMALL RIBOSOMAL SUBUNIT PROTEIN BS16M"/>
    <property type="match status" value="1"/>
</dbReference>
<dbReference type="Pfam" id="PF00886">
    <property type="entry name" value="Ribosomal_S16"/>
    <property type="match status" value="1"/>
</dbReference>
<dbReference type="SUPFAM" id="SSF54565">
    <property type="entry name" value="Ribosomal protein S16"/>
    <property type="match status" value="1"/>
</dbReference>
<sequence length="89" mass="10117">MSVKIRLMRLGAKKKPFYRVVVSDSRVQRDGKFIEHVGFYDPMVPCGEPGFLKIDAERLSYWLGVGAQPTDRVSWFIKKGFVEVRPAGA</sequence>
<organism>
    <name type="scientific">Anaplasma marginale (strain Florida)</name>
    <dbReference type="NCBI Taxonomy" id="320483"/>
    <lineage>
        <taxon>Bacteria</taxon>
        <taxon>Pseudomonadati</taxon>
        <taxon>Pseudomonadota</taxon>
        <taxon>Alphaproteobacteria</taxon>
        <taxon>Rickettsiales</taxon>
        <taxon>Anaplasmataceae</taxon>
        <taxon>Anaplasma</taxon>
    </lineage>
</organism>
<name>RS16_ANAMF</name>
<protein>
    <recommendedName>
        <fullName evidence="1">Small ribosomal subunit protein bS16</fullName>
    </recommendedName>
    <alternativeName>
        <fullName evidence="2">30S ribosomal protein S16</fullName>
    </alternativeName>
</protein>
<keyword id="KW-1185">Reference proteome</keyword>
<keyword id="KW-0687">Ribonucleoprotein</keyword>
<keyword id="KW-0689">Ribosomal protein</keyword>
<evidence type="ECO:0000255" key="1">
    <source>
        <dbReference type="HAMAP-Rule" id="MF_00385"/>
    </source>
</evidence>
<evidence type="ECO:0000305" key="2"/>